<gene>
    <name evidence="12" type="primary">EMC2</name>
    <name evidence="11" type="synonym">KIAA0103</name>
    <name evidence="12" type="synonym">TTC35</name>
</gene>
<reference key="1">
    <citation type="journal article" date="1995" name="DNA Res.">
        <title>Prediction of the coding sequences of unidentified human genes. III. The coding sequences of 40 new genes (KIAA0081-KIAA0120) deduced by analysis of cDNA clones from human cell line KG-1.</title>
        <authorList>
            <person name="Nagase T."/>
            <person name="Miyajima N."/>
            <person name="Tanaka A."/>
            <person name="Sazuka T."/>
            <person name="Seki N."/>
            <person name="Sato S."/>
            <person name="Tabata S."/>
            <person name="Ishikawa K."/>
            <person name="Kawarabayasi Y."/>
            <person name="Kotani H."/>
            <person name="Nomura N."/>
        </authorList>
    </citation>
    <scope>NUCLEOTIDE SEQUENCE [LARGE SCALE MRNA]</scope>
    <source>
        <tissue>Bone marrow</tissue>
    </source>
</reference>
<reference key="2">
    <citation type="submission" date="2004-06" db="EMBL/GenBank/DDBJ databases">
        <title>Cloning of human full open reading frames in Gateway(TM) system entry vector (pDONR201).</title>
        <authorList>
            <person name="Ebert L."/>
            <person name="Schick M."/>
            <person name="Neubert P."/>
            <person name="Schatten R."/>
            <person name="Henze S."/>
            <person name="Korn B."/>
        </authorList>
    </citation>
    <scope>NUCLEOTIDE SEQUENCE [LARGE SCALE MRNA]</scope>
</reference>
<reference key="3">
    <citation type="journal article" date="2004" name="Genome Res.">
        <title>The status, quality, and expansion of the NIH full-length cDNA project: the Mammalian Gene Collection (MGC).</title>
        <authorList>
            <consortium name="The MGC Project Team"/>
        </authorList>
    </citation>
    <scope>NUCLEOTIDE SEQUENCE [LARGE SCALE MRNA]</scope>
    <source>
        <tissue>Lung</tissue>
        <tissue>Urinary bladder</tissue>
    </source>
</reference>
<reference key="4">
    <citation type="journal article" date="2009" name="Science">
        <title>Lysine acetylation targets protein complexes and co-regulates major cellular functions.</title>
        <authorList>
            <person name="Choudhary C."/>
            <person name="Kumar C."/>
            <person name="Gnad F."/>
            <person name="Nielsen M.L."/>
            <person name="Rehman M."/>
            <person name="Walther T.C."/>
            <person name="Olsen J.V."/>
            <person name="Mann M."/>
        </authorList>
    </citation>
    <scope>ACETYLATION [LARGE SCALE ANALYSIS] AT LYS-255</scope>
    <scope>IDENTIFICATION BY MASS SPECTROMETRY [LARGE SCALE ANALYSIS]</scope>
</reference>
<reference key="5">
    <citation type="journal article" date="2011" name="BMC Syst. Biol.">
        <title>Initial characterization of the human central proteome.</title>
        <authorList>
            <person name="Burkard T.R."/>
            <person name="Planyavsky M."/>
            <person name="Kaupe I."/>
            <person name="Breitwieser F.P."/>
            <person name="Buerckstuemmer T."/>
            <person name="Bennett K.L."/>
            <person name="Superti-Furga G."/>
            <person name="Colinge J."/>
        </authorList>
    </citation>
    <scope>IDENTIFICATION BY MASS SPECTROMETRY [LARGE SCALE ANALYSIS]</scope>
</reference>
<reference key="6">
    <citation type="journal article" date="2012" name="Nat. Cell Biol.">
        <title>Defining human ERAD networks through an integrative mapping strategy.</title>
        <authorList>
            <person name="Christianson J.C."/>
            <person name="Olzmann J.A."/>
            <person name="Shaler T.A."/>
            <person name="Sowa M.E."/>
            <person name="Bennett E.J."/>
            <person name="Richter C.M."/>
            <person name="Tyler R.E."/>
            <person name="Greenblatt E.J."/>
            <person name="Harper J.W."/>
            <person name="Kopito R.R."/>
        </authorList>
    </citation>
    <scope>IDENTIFICATION IN THE EMC COMPLEX</scope>
    <scope>SUBCELLULAR LOCATION</scope>
</reference>
<reference key="7">
    <citation type="journal article" date="2012" name="Proc. Natl. Acad. Sci. U.S.A.">
        <title>N-terminal acetylome analyses and functional insights of the N-terminal acetyltransferase NatB.</title>
        <authorList>
            <person name="Van Damme P."/>
            <person name="Lasa M."/>
            <person name="Polevoda B."/>
            <person name="Gazquez C."/>
            <person name="Elosegui-Artola A."/>
            <person name="Kim D.S."/>
            <person name="De Juan-Pardo E."/>
            <person name="Demeyer K."/>
            <person name="Hole K."/>
            <person name="Larrea E."/>
            <person name="Timmerman E."/>
            <person name="Prieto J."/>
            <person name="Arnesen T."/>
            <person name="Sherman F."/>
            <person name="Gevaert K."/>
            <person name="Aldabe R."/>
        </authorList>
    </citation>
    <scope>ACETYLATION [LARGE SCALE ANALYSIS] AT ALA-2</scope>
    <scope>CLEAVAGE OF INITIATOR METHIONINE [LARGE SCALE ANALYSIS]</scope>
    <scope>IDENTIFICATION BY MASS SPECTROMETRY [LARGE SCALE ANALYSIS]</scope>
</reference>
<reference key="8">
    <citation type="journal article" date="2015" name="Proteomics">
        <title>N-terminome analysis of the human mitochondrial proteome.</title>
        <authorList>
            <person name="Vaca Jacome A.S."/>
            <person name="Rabilloud T."/>
            <person name="Schaeffer-Reiss C."/>
            <person name="Rompais M."/>
            <person name="Ayoub D."/>
            <person name="Lane L."/>
            <person name="Bairoch A."/>
            <person name="Van Dorsselaer A."/>
            <person name="Carapito C."/>
        </authorList>
    </citation>
    <scope>IDENTIFICATION BY MASS SPECTROMETRY [LARGE SCALE ANALYSIS]</scope>
</reference>
<reference key="9">
    <citation type="journal article" date="2018" name="Cell">
        <title>EMC Is Required to Initiate Accurate Membrane Protein Topogenesis.</title>
        <authorList>
            <person name="Chitwood P.J."/>
            <person name="Juszkiewicz S."/>
            <person name="Guna A."/>
            <person name="Shao S."/>
            <person name="Hegde R.S."/>
        </authorList>
    </citation>
    <scope>FUNCTION</scope>
</reference>
<reference key="10">
    <citation type="journal article" date="2018" name="Elife">
        <title>The ER membrane protein complex interacts cotranslationally to enable biogenesis of multipass membrane proteins.</title>
        <authorList>
            <person name="Shurtleff M.J."/>
            <person name="Itzhak D.N."/>
            <person name="Hussmann J.A."/>
            <person name="Schirle Oakdale N.T."/>
            <person name="Costa E.A."/>
            <person name="Jonikas M."/>
            <person name="Weibezahn J."/>
            <person name="Popova K.D."/>
            <person name="Jan C.H."/>
            <person name="Sinitcyn P."/>
            <person name="Vembar S.S."/>
            <person name="Hernandez H."/>
            <person name="Cox J."/>
            <person name="Burlingame A.L."/>
            <person name="Brodsky J.L."/>
            <person name="Frost A."/>
            <person name="Borner G.H."/>
            <person name="Weissman J.S."/>
        </authorList>
    </citation>
    <scope>FUNCTION</scope>
</reference>
<reference key="11">
    <citation type="journal article" date="2018" name="Science">
        <title>The ER membrane protein complex is a transmembrane domain insertase.</title>
        <authorList>
            <person name="Guna A."/>
            <person name="Volkmar N."/>
            <person name="Christianson J.C."/>
            <person name="Hegde R.S."/>
        </authorList>
    </citation>
    <scope>FUNCTION</scope>
    <scope>SUBUNIT</scope>
</reference>
<reference key="12">
    <citation type="journal article" date="2021" name="Mol. Cell">
        <title>WNK1 is an assembly factor for the human ER membrane protein complex.</title>
        <authorList>
            <person name="Pleiner T."/>
            <person name="Hazu M."/>
            <person name="Tomaleri G.P."/>
            <person name="Januszyk K."/>
            <person name="Oania R.S."/>
            <person name="Sweredoski M.J."/>
            <person name="Moradian A."/>
            <person name="Guna A."/>
            <person name="Voorhees R.M."/>
        </authorList>
    </citation>
    <scope>FUNCTION</scope>
    <scope>SUBUNIT</scope>
    <scope>INTERACTION WITH WNK1</scope>
    <scope>UBIQUITINATION</scope>
</reference>
<reference evidence="14 15" key="13">
    <citation type="journal article" date="2020" name="Elife">
        <title>The architecture of EMC reveals a path for membrane protein insertion.</title>
        <authorList>
            <person name="O'Donnell J.P."/>
            <person name="Phillips B.P."/>
            <person name="Yagita Y."/>
            <person name="Juszkiewicz S."/>
            <person name="Wagner A."/>
            <person name="Malinverni D."/>
            <person name="Keenan R.J."/>
            <person name="Miller E.A."/>
            <person name="Hegde R.S."/>
        </authorList>
    </citation>
    <scope>X-RAY CRYSTALLOGRAPHY (2.20 ANGSTROMS) OF 11-274 IN COMPLEX WITH EMC9</scope>
    <scope>STRUCTURE BY ELECTRON MICROSCOPY (6.40 ANGSTROMS) OF THE EMC COMPLEX</scope>
    <scope>FUNCTION</scope>
    <scope>SUBUNIT</scope>
    <scope>TOPOLOGY</scope>
    <scope>MUTAGENESIS OF ILE-61; MET-95; ALA-122; 189-HIS--TYR-191 AND 193-GLN-GLN-194</scope>
</reference>
<reference evidence="13" key="14">
    <citation type="journal article" date="2020" name="Science">
        <title>Structural basis for membrane insertion by the human ER membrane protein complex.</title>
        <authorList>
            <person name="Pleiner T."/>
            <person name="Tomaleri G.P."/>
            <person name="Januszyk K."/>
            <person name="Inglis A.J."/>
            <person name="Hazu M."/>
            <person name="Voorhees R.M."/>
        </authorList>
    </citation>
    <scope>STRUCTURE BY ELECTRON MICROSCOPY (3.40 ANGSTROMS) OF THE EMC COMPLEX</scope>
    <scope>FUNCTION</scope>
    <scope>TOPOLOGY</scope>
    <scope>MUTAGENESIS OF ARG-28; GLU-156; GLU-160; TYR-171; GLU-180; TYR-200; ARG-227 AND TRP-259</scope>
</reference>
<sequence length="297" mass="34834">MAKVSELYDVTWEEMRDKMRKWREENSRNSEQIVEVGEELINEYASKLGDDIWIIYEQVMIAALDYGRDDLALFCLQELRRQFPGSHRVKRLTGMRFEAMERYDDAIQLYDRILQEDPTNTAARKRKIAIRKAQGKNVEAIRELNEYLEQFVGDQEAWHELAELYINEHDYAKAAFCLEELMMTNPHNHLYCQQYAEVKYTQGGLENLELSRKYFAQALKLNNRNMRALFGLYMSASHIASNPKASAKTKKDNMKYASWAASQINRAYQFAGRSKKETKYSLKAVEDMLETLQITQS</sequence>
<protein>
    <recommendedName>
        <fullName evidence="10">ER membrane protein complex subunit 2</fullName>
    </recommendedName>
    <alternativeName>
        <fullName evidence="12">Tetratricopeptide repeat protein 35</fullName>
        <shortName evidence="12">TPR repeat protein 35</shortName>
    </alternativeName>
</protein>
<evidence type="ECO:0000250" key="1">
    <source>
        <dbReference type="UniProtKB" id="Q9CRD2"/>
    </source>
</evidence>
<evidence type="ECO:0000255" key="2"/>
<evidence type="ECO:0000269" key="3">
    <source>
    </source>
</evidence>
<evidence type="ECO:0000269" key="4">
    <source>
    </source>
</evidence>
<evidence type="ECO:0000269" key="5">
    <source>
    </source>
</evidence>
<evidence type="ECO:0000269" key="6">
    <source>
    </source>
</evidence>
<evidence type="ECO:0000269" key="7">
    <source>
    </source>
</evidence>
<evidence type="ECO:0000269" key="8">
    <source>
    </source>
</evidence>
<evidence type="ECO:0000269" key="9">
    <source>
    </source>
</evidence>
<evidence type="ECO:0000305" key="10"/>
<evidence type="ECO:0000312" key="11">
    <source>
        <dbReference type="EMBL" id="BAA03493.1"/>
    </source>
</evidence>
<evidence type="ECO:0000312" key="12">
    <source>
        <dbReference type="HGNC" id="HGNC:28963"/>
    </source>
</evidence>
<evidence type="ECO:0007744" key="13">
    <source>
        <dbReference type="PDB" id="6WW7"/>
    </source>
</evidence>
<evidence type="ECO:0007744" key="14">
    <source>
        <dbReference type="PDB" id="6Y4L"/>
    </source>
</evidence>
<evidence type="ECO:0007744" key="15">
    <source>
        <dbReference type="PDB" id="6Z3W"/>
    </source>
</evidence>
<evidence type="ECO:0007744" key="16">
    <source>
    </source>
</evidence>
<evidence type="ECO:0007744" key="17">
    <source>
    </source>
</evidence>
<evidence type="ECO:0007829" key="18">
    <source>
        <dbReference type="PDB" id="6WW7"/>
    </source>
</evidence>
<evidence type="ECO:0007829" key="19">
    <source>
        <dbReference type="PDB" id="6Y4L"/>
    </source>
</evidence>
<evidence type="ECO:0007829" key="20">
    <source>
        <dbReference type="PDB" id="8J0O"/>
    </source>
</evidence>
<organism>
    <name type="scientific">Homo sapiens</name>
    <name type="common">Human</name>
    <dbReference type="NCBI Taxonomy" id="9606"/>
    <lineage>
        <taxon>Eukaryota</taxon>
        <taxon>Metazoa</taxon>
        <taxon>Chordata</taxon>
        <taxon>Craniata</taxon>
        <taxon>Vertebrata</taxon>
        <taxon>Euteleostomi</taxon>
        <taxon>Mammalia</taxon>
        <taxon>Eutheria</taxon>
        <taxon>Euarchontoglires</taxon>
        <taxon>Primates</taxon>
        <taxon>Haplorrhini</taxon>
        <taxon>Catarrhini</taxon>
        <taxon>Hominidae</taxon>
        <taxon>Homo</taxon>
    </lineage>
</organism>
<dbReference type="EMBL" id="D14659">
    <property type="protein sequence ID" value="BAA03493.1"/>
    <property type="molecule type" value="mRNA"/>
</dbReference>
<dbReference type="EMBL" id="CR457402">
    <property type="protein sequence ID" value="CAG33683.1"/>
    <property type="molecule type" value="mRNA"/>
</dbReference>
<dbReference type="EMBL" id="BC020753">
    <property type="protein sequence ID" value="AAH20753.1"/>
    <property type="molecule type" value="mRNA"/>
</dbReference>
<dbReference type="EMBL" id="BC021667">
    <property type="protein sequence ID" value="AAH21667.1"/>
    <property type="molecule type" value="mRNA"/>
</dbReference>
<dbReference type="CCDS" id="CCDS6309.1"/>
<dbReference type="RefSeq" id="NP_055488.1">
    <property type="nucleotide sequence ID" value="NM_014673.5"/>
</dbReference>
<dbReference type="PDB" id="6WW7">
    <property type="method" value="EM"/>
    <property type="resolution" value="3.40 A"/>
    <property type="chains" value="B=1-297"/>
</dbReference>
<dbReference type="PDB" id="6Y4L">
    <property type="method" value="X-ray"/>
    <property type="resolution" value="2.20 A"/>
    <property type="chains" value="A=10-274"/>
</dbReference>
<dbReference type="PDB" id="6Z3W">
    <property type="method" value="EM"/>
    <property type="resolution" value="6.40 A"/>
    <property type="chains" value="B=1-297"/>
</dbReference>
<dbReference type="PDB" id="7ADO">
    <property type="method" value="EM"/>
    <property type="resolution" value="3.39 A"/>
    <property type="chains" value="B=1-297"/>
</dbReference>
<dbReference type="PDB" id="7ADP">
    <property type="method" value="EM"/>
    <property type="resolution" value="3.60 A"/>
    <property type="chains" value="B=1-297"/>
</dbReference>
<dbReference type="PDB" id="8EOI">
    <property type="method" value="EM"/>
    <property type="resolution" value="3.40 A"/>
    <property type="chains" value="B=3-293"/>
</dbReference>
<dbReference type="PDB" id="8J0N">
    <property type="method" value="EM"/>
    <property type="resolution" value="3.47 A"/>
    <property type="chains" value="B=1-297"/>
</dbReference>
<dbReference type="PDB" id="8J0O">
    <property type="method" value="EM"/>
    <property type="resolution" value="3.32 A"/>
    <property type="chains" value="B=1-297"/>
</dbReference>
<dbReference type="PDB" id="8S9S">
    <property type="method" value="EM"/>
    <property type="resolution" value="3.60 A"/>
    <property type="chains" value="2=1-297"/>
</dbReference>
<dbReference type="PDB" id="9C7V">
    <property type="method" value="EM"/>
    <property type="resolution" value="6.60 A"/>
    <property type="chains" value="2=1-297"/>
</dbReference>
<dbReference type="PDBsum" id="6WW7"/>
<dbReference type="PDBsum" id="6Y4L"/>
<dbReference type="PDBsum" id="6Z3W"/>
<dbReference type="PDBsum" id="7ADO"/>
<dbReference type="PDBsum" id="7ADP"/>
<dbReference type="PDBsum" id="8EOI"/>
<dbReference type="PDBsum" id="8J0N"/>
<dbReference type="PDBsum" id="8J0O"/>
<dbReference type="PDBsum" id="8S9S"/>
<dbReference type="PDBsum" id="9C7V"/>
<dbReference type="EMDB" id="EMD-11732"/>
<dbReference type="EMDB" id="EMD-11733"/>
<dbReference type="EMDB" id="EMD-21929"/>
<dbReference type="EMDB" id="EMD-28376"/>
<dbReference type="EMDB" id="EMD-35906"/>
<dbReference type="EMDB" id="EMD-35907"/>
<dbReference type="EMDB" id="EMD-40245"/>
<dbReference type="EMDB" id="EMD-40246"/>
<dbReference type="EMDB" id="EMD-45295"/>
<dbReference type="SMR" id="Q15006"/>
<dbReference type="BioGRID" id="115046">
    <property type="interactions" value="445"/>
</dbReference>
<dbReference type="ComplexPortal" id="CPX-5848">
    <property type="entry name" value="Endoplasmic reticulum membrane complex, EMC8 variant"/>
</dbReference>
<dbReference type="ComplexPortal" id="CPX-5881">
    <property type="entry name" value="Endoplasmic reticulum membrane complex, EMC9 variant"/>
</dbReference>
<dbReference type="CORUM" id="Q15006"/>
<dbReference type="FunCoup" id="Q15006">
    <property type="interactions" value="2357"/>
</dbReference>
<dbReference type="IntAct" id="Q15006">
    <property type="interactions" value="160"/>
</dbReference>
<dbReference type="MINT" id="Q15006"/>
<dbReference type="STRING" id="9606.ENSP00000220853"/>
<dbReference type="TCDB" id="3.A.27.1.1">
    <property type="family name" value="the endoplasmic reticulum membrane protein insertion complex (emc) family"/>
</dbReference>
<dbReference type="GlyGen" id="Q15006">
    <property type="glycosylation" value="1 site, 1 O-linked glycan (1 site)"/>
</dbReference>
<dbReference type="iPTMnet" id="Q15006"/>
<dbReference type="PhosphoSitePlus" id="Q15006"/>
<dbReference type="SwissPalm" id="Q15006"/>
<dbReference type="BioMuta" id="EMC2"/>
<dbReference type="DMDM" id="3183217"/>
<dbReference type="jPOST" id="Q15006"/>
<dbReference type="MassIVE" id="Q15006"/>
<dbReference type="PaxDb" id="9606-ENSP00000220853"/>
<dbReference type="PeptideAtlas" id="Q15006"/>
<dbReference type="ProteomicsDB" id="60357"/>
<dbReference type="Pumba" id="Q15006"/>
<dbReference type="Antibodypedia" id="26545">
    <property type="antibodies" value="108 antibodies from 23 providers"/>
</dbReference>
<dbReference type="DNASU" id="9694"/>
<dbReference type="Ensembl" id="ENST00000220853.8">
    <property type="protein sequence ID" value="ENSP00000220853.3"/>
    <property type="gene ID" value="ENSG00000104412.8"/>
</dbReference>
<dbReference type="GeneID" id="9694"/>
<dbReference type="KEGG" id="hsa:9694"/>
<dbReference type="MANE-Select" id="ENST00000220853.8">
    <property type="protein sequence ID" value="ENSP00000220853.3"/>
    <property type="RefSeq nucleotide sequence ID" value="NM_014673.5"/>
    <property type="RefSeq protein sequence ID" value="NP_055488.1"/>
</dbReference>
<dbReference type="UCSC" id="uc003ymw.2">
    <property type="organism name" value="human"/>
</dbReference>
<dbReference type="AGR" id="HGNC:28963"/>
<dbReference type="CTD" id="9694"/>
<dbReference type="DisGeNET" id="9694"/>
<dbReference type="GeneCards" id="EMC2"/>
<dbReference type="HGNC" id="HGNC:28963">
    <property type="gene designation" value="EMC2"/>
</dbReference>
<dbReference type="HPA" id="ENSG00000104412">
    <property type="expression patterns" value="Low tissue specificity"/>
</dbReference>
<dbReference type="MIM" id="607722">
    <property type="type" value="gene"/>
</dbReference>
<dbReference type="neXtProt" id="NX_Q15006"/>
<dbReference type="OpenTargets" id="ENSG00000104412"/>
<dbReference type="PharmGKB" id="PA162407224"/>
<dbReference type="VEuPathDB" id="HostDB:ENSG00000104412"/>
<dbReference type="eggNOG" id="KOG3060">
    <property type="taxonomic scope" value="Eukaryota"/>
</dbReference>
<dbReference type="GeneTree" id="ENSGT00390000011922"/>
<dbReference type="HOGENOM" id="CLU_052388_1_0_1"/>
<dbReference type="InParanoid" id="Q15006"/>
<dbReference type="OMA" id="MSDQEGW"/>
<dbReference type="OrthoDB" id="124397at2759"/>
<dbReference type="PAN-GO" id="Q15006">
    <property type="GO annotations" value="1 GO annotation based on evolutionary models"/>
</dbReference>
<dbReference type="PhylomeDB" id="Q15006"/>
<dbReference type="TreeFam" id="TF312997"/>
<dbReference type="PathwayCommons" id="Q15006"/>
<dbReference type="SignaLink" id="Q15006"/>
<dbReference type="BioGRID-ORCS" id="9694">
    <property type="hits" value="210 hits in 1178 CRISPR screens"/>
</dbReference>
<dbReference type="CD-CODE" id="FB4E32DD">
    <property type="entry name" value="Presynaptic clusters and postsynaptic densities"/>
</dbReference>
<dbReference type="ChiTaRS" id="EMC2">
    <property type="organism name" value="human"/>
</dbReference>
<dbReference type="GeneWiki" id="TTC35"/>
<dbReference type="GenomeRNAi" id="9694"/>
<dbReference type="Pharos" id="Q15006">
    <property type="development level" value="Tbio"/>
</dbReference>
<dbReference type="PRO" id="PR:Q15006"/>
<dbReference type="Proteomes" id="UP000005640">
    <property type="component" value="Chromosome 8"/>
</dbReference>
<dbReference type="RNAct" id="Q15006">
    <property type="molecule type" value="protein"/>
</dbReference>
<dbReference type="Bgee" id="ENSG00000104412">
    <property type="expression patterns" value="Expressed in calcaneal tendon and 209 other cell types or tissues"/>
</dbReference>
<dbReference type="ExpressionAtlas" id="Q15006">
    <property type="expression patterns" value="baseline and differential"/>
</dbReference>
<dbReference type="GO" id="GO:0005737">
    <property type="term" value="C:cytoplasm"/>
    <property type="evidence" value="ECO:0000314"/>
    <property type="project" value="UniProtKB"/>
</dbReference>
<dbReference type="GO" id="GO:0072546">
    <property type="term" value="C:EMC complex"/>
    <property type="evidence" value="ECO:0000314"/>
    <property type="project" value="UniProtKB"/>
</dbReference>
<dbReference type="GO" id="GO:0005783">
    <property type="term" value="C:endoplasmic reticulum"/>
    <property type="evidence" value="ECO:0000314"/>
    <property type="project" value="UniProtKB"/>
</dbReference>
<dbReference type="GO" id="GO:0005789">
    <property type="term" value="C:endoplasmic reticulum membrane"/>
    <property type="evidence" value="ECO:0000314"/>
    <property type="project" value="UniProtKB"/>
</dbReference>
<dbReference type="GO" id="GO:0042406">
    <property type="term" value="C:extrinsic component of endoplasmic reticulum membrane"/>
    <property type="evidence" value="ECO:0000314"/>
    <property type="project" value="UniProtKB"/>
</dbReference>
<dbReference type="GO" id="GO:0045050">
    <property type="term" value="P:protein insertion into ER membrane by stop-transfer membrane-anchor sequence"/>
    <property type="evidence" value="ECO:0000314"/>
    <property type="project" value="UniProtKB"/>
</dbReference>
<dbReference type="GO" id="GO:0071816">
    <property type="term" value="P:tail-anchored membrane protein insertion into ER membrane"/>
    <property type="evidence" value="ECO:0000314"/>
    <property type="project" value="UniProtKB"/>
</dbReference>
<dbReference type="FunFam" id="1.25.40.10:FF:000074">
    <property type="entry name" value="ER membrane protein complex subunit 2"/>
    <property type="match status" value="1"/>
</dbReference>
<dbReference type="Gene3D" id="1.25.40.10">
    <property type="entry name" value="Tetratricopeptide repeat domain"/>
    <property type="match status" value="1"/>
</dbReference>
<dbReference type="InterPro" id="IPR039856">
    <property type="entry name" value="EMC2-like"/>
</dbReference>
<dbReference type="InterPro" id="IPR011990">
    <property type="entry name" value="TPR-like_helical_dom_sf"/>
</dbReference>
<dbReference type="InterPro" id="IPR055217">
    <property type="entry name" value="TPR_EMC2"/>
</dbReference>
<dbReference type="InterPro" id="IPR019734">
    <property type="entry name" value="TPR_rpt"/>
</dbReference>
<dbReference type="PANTHER" id="PTHR12760">
    <property type="entry name" value="TETRATRICOPEPTIDE REPEAT PROTEIN"/>
    <property type="match status" value="1"/>
</dbReference>
<dbReference type="Pfam" id="PF22890">
    <property type="entry name" value="TPR_EMC2"/>
    <property type="match status" value="1"/>
</dbReference>
<dbReference type="SMART" id="SM00028">
    <property type="entry name" value="TPR"/>
    <property type="match status" value="3"/>
</dbReference>
<dbReference type="SUPFAM" id="SSF48452">
    <property type="entry name" value="TPR-like"/>
    <property type="match status" value="1"/>
</dbReference>
<dbReference type="PROSITE" id="PS50005">
    <property type="entry name" value="TPR"/>
    <property type="match status" value="2"/>
</dbReference>
<dbReference type="PROSITE" id="PS50293">
    <property type="entry name" value="TPR_REGION"/>
    <property type="match status" value="1"/>
</dbReference>
<proteinExistence type="evidence at protein level"/>
<keyword id="KW-0002">3D-structure</keyword>
<keyword id="KW-0007">Acetylation</keyword>
<keyword id="KW-0256">Endoplasmic reticulum</keyword>
<keyword id="KW-0472">Membrane</keyword>
<keyword id="KW-1267">Proteomics identification</keyword>
<keyword id="KW-1185">Reference proteome</keyword>
<keyword id="KW-0677">Repeat</keyword>
<keyword id="KW-0802">TPR repeat</keyword>
<keyword id="KW-0832">Ubl conjugation</keyword>
<feature type="initiator methionine" description="Removed" evidence="17">
    <location>
        <position position="1"/>
    </location>
</feature>
<feature type="chain" id="PRO_0000106353" description="ER membrane protein complex subunit 2">
    <location>
        <begin position="2"/>
        <end position="297"/>
    </location>
</feature>
<feature type="repeat" description="TPR 1" evidence="2">
    <location>
        <begin position="87"/>
        <end position="120"/>
    </location>
</feature>
<feature type="repeat" description="TPR 2" evidence="2">
    <location>
        <begin position="155"/>
        <end position="188"/>
    </location>
</feature>
<feature type="repeat" description="TPR 3" evidence="2">
    <location>
        <begin position="192"/>
        <end position="225"/>
    </location>
</feature>
<feature type="modified residue" description="N-acetylalanine" evidence="17">
    <location>
        <position position="2"/>
    </location>
</feature>
<feature type="modified residue" description="N6-acetyllysine" evidence="16">
    <location>
        <position position="255"/>
    </location>
</feature>
<feature type="mutagenesis site" description="Loss of interaction with EMC5." evidence="7">
    <original>R</original>
    <variation>A</variation>
    <location>
        <position position="28"/>
    </location>
</feature>
<feature type="mutagenesis site" description="No effect on transmembrane domain binding of tail-anchored proteins; when associated with K-95 and E-122." evidence="8">
    <original>I</original>
    <variation>K</variation>
    <location>
        <position position="61"/>
    </location>
</feature>
<feature type="mutagenesis site" description="No effect on transmembrane domain binding of tail-anchored proteins; when associated with K-61 and E-122." evidence="8">
    <original>M</original>
    <variation>K</variation>
    <location>
        <position position="95"/>
    </location>
</feature>
<feature type="mutagenesis site" description="No effect on transmembrane domain binding of tail-anchored proteins; when associated with K-61 and K-95." evidence="8">
    <original>A</original>
    <variation>E</variation>
    <location>
        <position position="122"/>
    </location>
</feature>
<feature type="mutagenesis site" description="Loss of interaction with EMC5." evidence="7">
    <original>E</original>
    <variation>A</variation>
    <location>
        <position position="156"/>
    </location>
</feature>
<feature type="mutagenesis site" description="Loss of interaction with EMC5." evidence="7">
    <original>E</original>
    <variation>A</variation>
    <location>
        <position position="160"/>
    </location>
</feature>
<feature type="mutagenesis site" description="Decreased interaction with EMC5 and EMC8." evidence="7">
    <original>Y</original>
    <variation>A</variation>
    <location>
        <position position="171"/>
    </location>
</feature>
<feature type="mutagenesis site" description="Decreased interaction with EMC3." evidence="7">
    <original>E</original>
    <variation>A</variation>
    <location>
        <position position="180"/>
    </location>
</feature>
<feature type="mutagenesis site" description="Decreased transmembrane domain binding of tail-anchored proteins." evidence="8">
    <original>HLY</original>
    <variation>EEK</variation>
    <location>
        <begin position="189"/>
        <end position="191"/>
    </location>
</feature>
<feature type="mutagenesis site" description="No effect on transmembrane domain binding of tail-anchored proteins." evidence="8">
    <original>QQ</original>
    <variation>EK</variation>
    <location>
        <begin position="193"/>
        <end position="194"/>
    </location>
</feature>
<feature type="mutagenesis site" description="Decreased interaction with EMC5 and EMC8." evidence="7">
    <original>Y</original>
    <variation>A</variation>
    <location>
        <position position="200"/>
    </location>
</feature>
<feature type="mutagenesis site" description="Loss of interaction with EMC5 and EMC8." evidence="7">
    <original>R</original>
    <variation>A</variation>
    <location>
        <position position="227"/>
    </location>
</feature>
<feature type="mutagenesis site" description="Decreased interaction with EMC3." evidence="7">
    <original>W</original>
    <variation>A</variation>
    <location>
        <position position="259"/>
    </location>
</feature>
<feature type="sequence conflict" description="In Ref. 3; AAH20753." evidence="10" ref="3">
    <original>N</original>
    <variation>S</variation>
    <location>
        <position position="145"/>
    </location>
</feature>
<feature type="helix" evidence="20">
    <location>
        <begin position="3"/>
        <end position="8"/>
    </location>
</feature>
<feature type="helix" evidence="19">
    <location>
        <begin position="13"/>
        <end position="25"/>
    </location>
</feature>
<feature type="helix" evidence="19">
    <location>
        <begin position="30"/>
        <end position="43"/>
    </location>
</feature>
<feature type="helix" evidence="19">
    <location>
        <begin position="45"/>
        <end position="48"/>
    </location>
</feature>
<feature type="helix" evidence="19">
    <location>
        <begin position="49"/>
        <end position="51"/>
    </location>
</feature>
<feature type="helix" evidence="19">
    <location>
        <begin position="52"/>
        <end position="66"/>
    </location>
</feature>
<feature type="helix" evidence="19">
    <location>
        <begin position="69"/>
        <end position="82"/>
    </location>
</feature>
<feature type="helix" evidence="19">
    <location>
        <begin position="87"/>
        <end position="99"/>
    </location>
</feature>
<feature type="helix" evidence="19">
    <location>
        <begin position="103"/>
        <end position="116"/>
    </location>
</feature>
<feature type="helix" evidence="19">
    <location>
        <begin position="121"/>
        <end position="133"/>
    </location>
</feature>
<feature type="helix" evidence="19">
    <location>
        <begin position="137"/>
        <end position="150"/>
    </location>
</feature>
<feature type="helix" evidence="19">
    <location>
        <begin position="155"/>
        <end position="167"/>
    </location>
</feature>
<feature type="helix" evidence="19">
    <location>
        <begin position="171"/>
        <end position="184"/>
    </location>
</feature>
<feature type="helix" evidence="19">
    <location>
        <begin position="189"/>
        <end position="202"/>
    </location>
</feature>
<feature type="helix" evidence="19">
    <location>
        <begin position="205"/>
        <end position="221"/>
    </location>
</feature>
<feature type="helix" evidence="19">
    <location>
        <begin position="226"/>
        <end position="240"/>
    </location>
</feature>
<feature type="strand" evidence="20">
    <location>
        <begin position="242"/>
        <end position="244"/>
    </location>
</feature>
<feature type="helix" evidence="19">
    <location>
        <begin position="247"/>
        <end position="274"/>
    </location>
</feature>
<feature type="strand" evidence="18">
    <location>
        <begin position="275"/>
        <end position="277"/>
    </location>
</feature>
<feature type="helix" evidence="20">
    <location>
        <begin position="278"/>
        <end position="296"/>
    </location>
</feature>
<accession>Q15006</accession>
<accession>Q8WUE1</accession>
<comment type="function">
    <text evidence="4 5 6 7 8 9 10">Part of the endoplasmic reticulum membrane protein complex (EMC) that enables the energy-independent insertion into endoplasmic reticulum membranes of newly synthesized membrane proteins (PubMed:29242231, PubMed:29809151, PubMed:30415835, PubMed:32439656, PubMed:32459176, PubMed:33964204). Preferentially accommodates proteins with transmembrane domains that are weakly hydrophobic or contain destabilizing features such as charged and aromatic residues (PubMed:29242231, PubMed:29809151, PubMed:30415835). Involved in the cotranslational insertion of multi-pass membrane proteins in which stop-transfer membrane-anchor sequences become ER membrane spanning helices (PubMed:29809151, PubMed:30415835). It is also required for the post-translational insertion of tail-anchored/TA proteins in endoplasmic reticulum membranes (PubMed:29242231, PubMed:29809151). By mediating the proper cotranslational insertion of N-terminal transmembrane domains in an N-exo topology, with translocated N-terminus in the lumen of the ER, controls the topology of multi-pass membrane proteins like the G protein-coupled receptors (PubMed:30415835). By regulating the insertion of various proteins in membranes, it is indirectly involved in many cellular processes (Probable).</text>
</comment>
<comment type="subunit">
    <text evidence="3 4 7 8 9">Component of the ER membrane protein complex (EMC) (PubMed:22119785, PubMed:29242231, PubMed:32439656, PubMed:32459176, PubMed:33964204). Interacts with WNK1 (via amphipathic alpha-helix region); promoting the ER membrane protein complex assembly by preventing EMC2 ubiquitination (PubMed:33964204).</text>
</comment>
<comment type="interaction">
    <interactant intactId="EBI-359031">
        <id>Q15006</id>
    </interactant>
    <interactant intactId="EBI-10235116">
        <id>Q53Y03</id>
        <label>COX4NB</label>
    </interactant>
    <organismsDiffer>false</organismsDiffer>
    <experiments>3</experiments>
</comment>
<comment type="interaction">
    <interactant intactId="EBI-359031">
        <id>Q15006</id>
    </interactant>
    <interactant intactId="EBI-1054670">
        <id>Q9P0I2</id>
        <label>EMC3</label>
    </interactant>
    <organismsDiffer>false</organismsDiffer>
    <experiments>11</experiments>
</comment>
<comment type="interaction">
    <interactant intactId="EBI-359031">
        <id>Q15006</id>
    </interactant>
    <interactant intactId="EBI-741841">
        <id>O43402</id>
        <label>EMC8</label>
    </interactant>
    <organismsDiffer>false</organismsDiffer>
    <experiments>17</experiments>
</comment>
<comment type="interaction">
    <interactant intactId="EBI-359031">
        <id>Q15006</id>
    </interactant>
    <interactant intactId="EBI-748366">
        <id>Q9Y3B6</id>
        <label>EMC9</label>
    </interactant>
    <organismsDiffer>false</organismsDiffer>
    <experiments>14</experiments>
</comment>
<comment type="interaction">
    <interactant intactId="EBI-359031">
        <id>Q15006</id>
    </interactant>
    <interactant intactId="EBI-12885352">
        <id>Q96GW1</id>
        <label>HSP90B1</label>
    </interactant>
    <organismsDiffer>false</organismsDiffer>
    <experiments>3</experiments>
</comment>
<comment type="interaction">
    <interactant intactId="EBI-359031">
        <id>Q15006</id>
    </interactant>
    <interactant intactId="EBI-747204">
        <id>Q9UKT9</id>
        <label>IKZF3</label>
    </interactant>
    <organismsDiffer>false</organismsDiffer>
    <experiments>3</experiments>
</comment>
<comment type="interaction">
    <interactant intactId="EBI-359031">
        <id>Q15006</id>
    </interactant>
    <interactant intactId="EBI-6163737">
        <id>Q8N4V1</id>
        <label>MMGT1</label>
    </interactant>
    <organismsDiffer>false</organismsDiffer>
    <experiments>13</experiments>
</comment>
<comment type="interaction">
    <interactant intactId="EBI-359031">
        <id>Q15006</id>
    </interactant>
    <interactant intactId="EBI-12012016">
        <id>Q9Y5F1</id>
        <label>PCDHB12</label>
    </interactant>
    <organismsDiffer>false</organismsDiffer>
    <experiments>3</experiments>
</comment>
<comment type="interaction">
    <interactant intactId="EBI-359031">
        <id>Q15006</id>
    </interactant>
    <interactant intactId="EBI-747389">
        <id>Q7L8J4</id>
        <label>SH3BP5L</label>
    </interactant>
    <organismsDiffer>false</organismsDiffer>
    <experiments>3</experiments>
</comment>
<comment type="interaction">
    <interactant intactId="EBI-359031">
        <id>Q15006</id>
    </interactant>
    <interactant intactId="EBI-10962400">
        <id>Q9UHA2</id>
        <label>SS18L2</label>
    </interactant>
    <organismsDiffer>false</organismsDiffer>
    <experiments>3</experiments>
</comment>
<comment type="subcellular location">
    <subcellularLocation>
        <location evidence="3">Endoplasmic reticulum membrane</location>
        <topology evidence="7 8">Peripheral membrane protein</topology>
        <orientation evidence="3 7">Cytoplasmic side</orientation>
    </subcellularLocation>
    <text evidence="1">May also localize to the nuclear envelope.</text>
</comment>
<comment type="PTM">
    <text evidence="9">Ubiquitinated when soluble in the cytoplasm, leading to its degradation by the proteasome (PubMed:33964204). Interaction with EMC2 prevents its ubiquitination and degradation (PubMed:33964204).</text>
</comment>
<comment type="similarity">
    <text evidence="10">Belongs to the EMC2 family.</text>
</comment>
<name>EMC2_HUMAN</name>